<evidence type="ECO:0000250" key="1"/>
<evidence type="ECO:0000255" key="2">
    <source>
        <dbReference type="HAMAP-Rule" id="MF_00062"/>
    </source>
</evidence>
<dbReference type="EC" id="2.7.7.4" evidence="2"/>
<dbReference type="EMBL" id="CP000083">
    <property type="protein sequence ID" value="AAZ25953.1"/>
    <property type="molecule type" value="Genomic_DNA"/>
</dbReference>
<dbReference type="RefSeq" id="WP_011042962.1">
    <property type="nucleotide sequence ID" value="NC_003910.7"/>
</dbReference>
<dbReference type="SMR" id="Q482Z9"/>
<dbReference type="STRING" id="167879.CPS_2143"/>
<dbReference type="KEGG" id="cps:CPS_2143"/>
<dbReference type="eggNOG" id="COG2895">
    <property type="taxonomic scope" value="Bacteria"/>
</dbReference>
<dbReference type="HOGENOM" id="CLU_007265_5_2_6"/>
<dbReference type="UniPathway" id="UPA00140">
    <property type="reaction ID" value="UER00204"/>
</dbReference>
<dbReference type="Proteomes" id="UP000000547">
    <property type="component" value="Chromosome"/>
</dbReference>
<dbReference type="GO" id="GO:0005524">
    <property type="term" value="F:ATP binding"/>
    <property type="evidence" value="ECO:0007669"/>
    <property type="project" value="UniProtKB-KW"/>
</dbReference>
<dbReference type="GO" id="GO:0005525">
    <property type="term" value="F:GTP binding"/>
    <property type="evidence" value="ECO:0007669"/>
    <property type="project" value="UniProtKB-UniRule"/>
</dbReference>
<dbReference type="GO" id="GO:0003924">
    <property type="term" value="F:GTPase activity"/>
    <property type="evidence" value="ECO:0007669"/>
    <property type="project" value="InterPro"/>
</dbReference>
<dbReference type="GO" id="GO:0004781">
    <property type="term" value="F:sulfate adenylyltransferase (ATP) activity"/>
    <property type="evidence" value="ECO:0007669"/>
    <property type="project" value="UniProtKB-UniRule"/>
</dbReference>
<dbReference type="GO" id="GO:0070814">
    <property type="term" value="P:hydrogen sulfide biosynthetic process"/>
    <property type="evidence" value="ECO:0007669"/>
    <property type="project" value="UniProtKB-UniRule"/>
</dbReference>
<dbReference type="GO" id="GO:0000103">
    <property type="term" value="P:sulfate assimilation"/>
    <property type="evidence" value="ECO:0007669"/>
    <property type="project" value="UniProtKB-UniRule"/>
</dbReference>
<dbReference type="CDD" id="cd04166">
    <property type="entry name" value="CysN_ATPS"/>
    <property type="match status" value="1"/>
</dbReference>
<dbReference type="CDD" id="cd03695">
    <property type="entry name" value="CysN_NodQ_II"/>
    <property type="match status" value="1"/>
</dbReference>
<dbReference type="CDD" id="cd04095">
    <property type="entry name" value="CysN_NoDQ_III"/>
    <property type="match status" value="1"/>
</dbReference>
<dbReference type="FunFam" id="2.40.30.10:FF:000027">
    <property type="entry name" value="Sulfate adenylyltransferase subunit 1"/>
    <property type="match status" value="1"/>
</dbReference>
<dbReference type="FunFam" id="3.40.50.300:FF:000119">
    <property type="entry name" value="Sulfate adenylyltransferase subunit 1"/>
    <property type="match status" value="1"/>
</dbReference>
<dbReference type="Gene3D" id="3.40.50.300">
    <property type="entry name" value="P-loop containing nucleotide triphosphate hydrolases"/>
    <property type="match status" value="1"/>
</dbReference>
<dbReference type="Gene3D" id="2.40.30.10">
    <property type="entry name" value="Translation factors"/>
    <property type="match status" value="2"/>
</dbReference>
<dbReference type="HAMAP" id="MF_00062">
    <property type="entry name" value="Sulf_adenylyltr_sub1"/>
    <property type="match status" value="1"/>
</dbReference>
<dbReference type="InterPro" id="IPR041757">
    <property type="entry name" value="CysN_GTP-bd"/>
</dbReference>
<dbReference type="InterPro" id="IPR044138">
    <property type="entry name" value="CysN_II"/>
</dbReference>
<dbReference type="InterPro" id="IPR044139">
    <property type="entry name" value="CysN_NoDQ_III"/>
</dbReference>
<dbReference type="InterPro" id="IPR031157">
    <property type="entry name" value="G_TR_CS"/>
</dbReference>
<dbReference type="InterPro" id="IPR054696">
    <property type="entry name" value="GTP-eEF1A_C"/>
</dbReference>
<dbReference type="InterPro" id="IPR027417">
    <property type="entry name" value="P-loop_NTPase"/>
</dbReference>
<dbReference type="InterPro" id="IPR005225">
    <property type="entry name" value="Small_GTP-bd"/>
</dbReference>
<dbReference type="InterPro" id="IPR011779">
    <property type="entry name" value="SO4_adenylTrfase_lsu"/>
</dbReference>
<dbReference type="InterPro" id="IPR000795">
    <property type="entry name" value="T_Tr_GTP-bd_dom"/>
</dbReference>
<dbReference type="InterPro" id="IPR050100">
    <property type="entry name" value="TRAFAC_GTPase_members"/>
</dbReference>
<dbReference type="InterPro" id="IPR009000">
    <property type="entry name" value="Transl_B-barrel_sf"/>
</dbReference>
<dbReference type="InterPro" id="IPR009001">
    <property type="entry name" value="Transl_elong_EF1A/Init_IF2_C"/>
</dbReference>
<dbReference type="NCBIfam" id="TIGR02034">
    <property type="entry name" value="CysN"/>
    <property type="match status" value="1"/>
</dbReference>
<dbReference type="NCBIfam" id="NF003478">
    <property type="entry name" value="PRK05124.1"/>
    <property type="match status" value="1"/>
</dbReference>
<dbReference type="NCBIfam" id="NF004035">
    <property type="entry name" value="PRK05506.1"/>
    <property type="match status" value="1"/>
</dbReference>
<dbReference type="NCBIfam" id="TIGR00231">
    <property type="entry name" value="small_GTP"/>
    <property type="match status" value="1"/>
</dbReference>
<dbReference type="PANTHER" id="PTHR23115">
    <property type="entry name" value="TRANSLATION FACTOR"/>
    <property type="match status" value="1"/>
</dbReference>
<dbReference type="Pfam" id="PF22594">
    <property type="entry name" value="GTP-eEF1A_C"/>
    <property type="match status" value="1"/>
</dbReference>
<dbReference type="Pfam" id="PF00009">
    <property type="entry name" value="GTP_EFTU"/>
    <property type="match status" value="1"/>
</dbReference>
<dbReference type="PRINTS" id="PR00315">
    <property type="entry name" value="ELONGATNFCT"/>
</dbReference>
<dbReference type="SUPFAM" id="SSF50465">
    <property type="entry name" value="EF-Tu/eEF-1alpha/eIF2-gamma C-terminal domain"/>
    <property type="match status" value="1"/>
</dbReference>
<dbReference type="SUPFAM" id="SSF52540">
    <property type="entry name" value="P-loop containing nucleoside triphosphate hydrolases"/>
    <property type="match status" value="1"/>
</dbReference>
<dbReference type="SUPFAM" id="SSF50447">
    <property type="entry name" value="Translation proteins"/>
    <property type="match status" value="1"/>
</dbReference>
<dbReference type="PROSITE" id="PS00301">
    <property type="entry name" value="G_TR_1"/>
    <property type="match status" value="1"/>
</dbReference>
<dbReference type="PROSITE" id="PS51722">
    <property type="entry name" value="G_TR_2"/>
    <property type="match status" value="1"/>
</dbReference>
<accession>Q482Z9</accession>
<comment type="function">
    <text evidence="2">With CysD forms the ATP sulfurylase (ATPS) that catalyzes the adenylation of sulfate producing adenosine 5'-phosphosulfate (APS) and diphosphate, the first enzymatic step in sulfur assimilation pathway. APS synthesis involves the formation of a high-energy phosphoric-sulfuric acid anhydride bond driven by GTP hydrolysis by CysN coupled to ATP hydrolysis by CysD.</text>
</comment>
<comment type="catalytic activity">
    <reaction evidence="2">
        <text>sulfate + ATP + H(+) = adenosine 5'-phosphosulfate + diphosphate</text>
        <dbReference type="Rhea" id="RHEA:18133"/>
        <dbReference type="ChEBI" id="CHEBI:15378"/>
        <dbReference type="ChEBI" id="CHEBI:16189"/>
        <dbReference type="ChEBI" id="CHEBI:30616"/>
        <dbReference type="ChEBI" id="CHEBI:33019"/>
        <dbReference type="ChEBI" id="CHEBI:58243"/>
        <dbReference type="EC" id="2.7.7.4"/>
    </reaction>
</comment>
<comment type="pathway">
    <text evidence="2">Sulfur metabolism; hydrogen sulfide biosynthesis; sulfite from sulfate: step 1/3.</text>
</comment>
<comment type="subunit">
    <text evidence="2">Heterodimer composed of CysD, the smaller subunit, and CysN.</text>
</comment>
<comment type="similarity">
    <text evidence="2">Belongs to the TRAFAC class translation factor GTPase superfamily. Classic translation factor GTPase family. CysN/NodQ subfamily.</text>
</comment>
<proteinExistence type="inferred from homology"/>
<gene>
    <name evidence="2" type="primary">cysN</name>
    <name type="ordered locus">CPS_2143</name>
</gene>
<keyword id="KW-0067">ATP-binding</keyword>
<keyword id="KW-0342">GTP-binding</keyword>
<keyword id="KW-0547">Nucleotide-binding</keyword>
<keyword id="KW-0548">Nucleotidyltransferase</keyword>
<keyword id="KW-0808">Transferase</keyword>
<sequence>MSHQSDLIEEDIQAYLKQHENKELVRFLTCGSVDDGKSTLIGRLLHDSKMIFEDQLAAIEKDSKKSGTTGEAIDLALLVDGLQSEREQGITIDVAYRYFSTDKRKFIIADTPGHEQYTRNMATGASTCDIAIILIDARYGVQTQTRRHSFICSLLGIKHIVVAVNKMDLVDYSQERYQEIKKEYREFTESLEFSDVRFVPLSALNGDNVVDESVNMPWYPGATLMKLLNTIDVKTQEQFTQLRFQVQYVNRPNLDFRGFAGTLASGHVLVGDTIVALPSGKESVVKEIVTYDGNLERADKGMAVTLTLEDEIDISRGEIIVKKGSLPISAKEFSATVVWMHENELEPGREYFIKHGSKMTTGHAQNIVSKYDVNTMESLSSSQLAINDIGIVNFVAGETLHFDAYEDNQGTGAFIIIDRLSNVTVGAGMINHAIDEKAQEYSAFELELNALVRKQFPHWGARDITK</sequence>
<name>CYSN_COLP3</name>
<reference key="1">
    <citation type="journal article" date="2005" name="Proc. Natl. Acad. Sci. U.S.A.">
        <title>The psychrophilic lifestyle as revealed by the genome sequence of Colwellia psychrerythraea 34H through genomic and proteomic analyses.</title>
        <authorList>
            <person name="Methe B.A."/>
            <person name="Nelson K.E."/>
            <person name="Deming J.W."/>
            <person name="Momen B."/>
            <person name="Melamud E."/>
            <person name="Zhang X."/>
            <person name="Moult J."/>
            <person name="Madupu R."/>
            <person name="Nelson W.C."/>
            <person name="Dodson R.J."/>
            <person name="Brinkac L.M."/>
            <person name="Daugherty S.C."/>
            <person name="Durkin A.S."/>
            <person name="DeBoy R.T."/>
            <person name="Kolonay J.F."/>
            <person name="Sullivan S.A."/>
            <person name="Zhou L."/>
            <person name="Davidsen T.M."/>
            <person name="Wu M."/>
            <person name="Huston A.L."/>
            <person name="Lewis M."/>
            <person name="Weaver B."/>
            <person name="Weidman J.F."/>
            <person name="Khouri H."/>
            <person name="Utterback T.R."/>
            <person name="Feldblyum T.V."/>
            <person name="Fraser C.M."/>
        </authorList>
    </citation>
    <scope>NUCLEOTIDE SEQUENCE [LARGE SCALE GENOMIC DNA]</scope>
    <source>
        <strain>34H / ATCC BAA-681</strain>
    </source>
</reference>
<feature type="chain" id="PRO_1000092137" description="Sulfate adenylyltransferase subunit 1">
    <location>
        <begin position="1"/>
        <end position="466"/>
    </location>
</feature>
<feature type="domain" description="tr-type G">
    <location>
        <begin position="22"/>
        <end position="237"/>
    </location>
</feature>
<feature type="region of interest" description="G1" evidence="1">
    <location>
        <begin position="31"/>
        <end position="38"/>
    </location>
</feature>
<feature type="region of interest" description="G2" evidence="1">
    <location>
        <begin position="89"/>
        <end position="93"/>
    </location>
</feature>
<feature type="region of interest" description="G3" evidence="1">
    <location>
        <begin position="110"/>
        <end position="113"/>
    </location>
</feature>
<feature type="region of interest" description="G4" evidence="1">
    <location>
        <begin position="165"/>
        <end position="168"/>
    </location>
</feature>
<feature type="region of interest" description="G5" evidence="1">
    <location>
        <begin position="202"/>
        <end position="204"/>
    </location>
</feature>
<feature type="binding site" evidence="2">
    <location>
        <begin position="31"/>
        <end position="38"/>
    </location>
    <ligand>
        <name>GTP</name>
        <dbReference type="ChEBI" id="CHEBI:37565"/>
    </ligand>
</feature>
<feature type="binding site" evidence="2">
    <location>
        <begin position="110"/>
        <end position="114"/>
    </location>
    <ligand>
        <name>GTP</name>
        <dbReference type="ChEBI" id="CHEBI:37565"/>
    </ligand>
</feature>
<feature type="binding site" evidence="2">
    <location>
        <begin position="165"/>
        <end position="168"/>
    </location>
    <ligand>
        <name>GTP</name>
        <dbReference type="ChEBI" id="CHEBI:37565"/>
    </ligand>
</feature>
<organism>
    <name type="scientific">Colwellia psychrerythraea (strain 34H / ATCC BAA-681)</name>
    <name type="common">Vibrio psychroerythus</name>
    <dbReference type="NCBI Taxonomy" id="167879"/>
    <lineage>
        <taxon>Bacteria</taxon>
        <taxon>Pseudomonadati</taxon>
        <taxon>Pseudomonadota</taxon>
        <taxon>Gammaproteobacteria</taxon>
        <taxon>Alteromonadales</taxon>
        <taxon>Colwelliaceae</taxon>
        <taxon>Colwellia</taxon>
    </lineage>
</organism>
<protein>
    <recommendedName>
        <fullName evidence="2">Sulfate adenylyltransferase subunit 1</fullName>
        <ecNumber evidence="2">2.7.7.4</ecNumber>
    </recommendedName>
    <alternativeName>
        <fullName evidence="2">ATP-sulfurylase large subunit</fullName>
    </alternativeName>
    <alternativeName>
        <fullName evidence="2">Sulfate adenylate transferase</fullName>
        <shortName evidence="2">SAT</shortName>
    </alternativeName>
</protein>